<accession>A0AJU2</accession>
<sequence length="426" mass="46303">MYVLKNGQILNESGELENKDVLIQNGKVNLIADSIEVTSGEEFDATGKLIAPGFIDVHVHLREPGGEHKETILTGTKAAARGGYTTICSMPNTKPVPDSKEVMERLQAKIKETAEVRVLPYASITTSLGTDELVDFEALKEAGAFAFTDDGVGVQLAGTMYEAMKRAAALDMAIVAHCEDNSLIYGGVVHDGIFAEREGLKGIPNIAESVQIARDVLLAEAAGCHYHVCHISTKESVRVVRDAKRAGIRVTAEVSPHHLILDEEAIPGNDGQWKMNPPLRSKADRAALLEGLLDGTIDFIATDHAPHAAEEKNVPMEQAAFGIVGLETAFPLLYTHFVQTNEWTLKQLIDWMTVKPAECFKLPYGKLEEGTTADIVVLDLEKEATIDPDTFYSKGKNTPFVGETCIGWPVATFVEGTLVYKEGESK</sequence>
<comment type="function">
    <text evidence="1">Catalyzes the reversible cyclization of carbamoyl aspartate to dihydroorotate.</text>
</comment>
<comment type="catalytic activity">
    <reaction evidence="1">
        <text>(S)-dihydroorotate + H2O = N-carbamoyl-L-aspartate + H(+)</text>
        <dbReference type="Rhea" id="RHEA:24296"/>
        <dbReference type="ChEBI" id="CHEBI:15377"/>
        <dbReference type="ChEBI" id="CHEBI:15378"/>
        <dbReference type="ChEBI" id="CHEBI:30864"/>
        <dbReference type="ChEBI" id="CHEBI:32814"/>
        <dbReference type="EC" id="3.5.2.3"/>
    </reaction>
</comment>
<comment type="cofactor">
    <cofactor evidence="1">
        <name>Zn(2+)</name>
        <dbReference type="ChEBI" id="CHEBI:29105"/>
    </cofactor>
    <text evidence="1">Binds 2 Zn(2+) ions per subunit.</text>
</comment>
<comment type="pathway">
    <text evidence="1">Pyrimidine metabolism; UMP biosynthesis via de novo pathway; (S)-dihydroorotate from bicarbonate: step 3/3.</text>
</comment>
<comment type="similarity">
    <text evidence="1">Belongs to the metallo-dependent hydrolases superfamily. DHOase family. Class I DHOase subfamily.</text>
</comment>
<protein>
    <recommendedName>
        <fullName evidence="1">Dihydroorotase</fullName>
        <shortName evidence="1">DHOase</shortName>
        <ecNumber evidence="1">3.5.2.3</ecNumber>
    </recommendedName>
</protein>
<reference key="1">
    <citation type="journal article" date="2006" name="J. Bacteriol.">
        <title>Whole-genome sequence of Listeria welshimeri reveals common steps in genome reduction with Listeria innocua as compared to Listeria monocytogenes.</title>
        <authorList>
            <person name="Hain T."/>
            <person name="Steinweg C."/>
            <person name="Kuenne C.T."/>
            <person name="Billion A."/>
            <person name="Ghai R."/>
            <person name="Chatterjee S.S."/>
            <person name="Domann E."/>
            <person name="Kaerst U."/>
            <person name="Goesmann A."/>
            <person name="Bekel T."/>
            <person name="Bartels D."/>
            <person name="Kaiser O."/>
            <person name="Meyer F."/>
            <person name="Puehler A."/>
            <person name="Weisshaar B."/>
            <person name="Wehland J."/>
            <person name="Liang C."/>
            <person name="Dandekar T."/>
            <person name="Lampidis R."/>
            <person name="Kreft J."/>
            <person name="Goebel W."/>
            <person name="Chakraborty T."/>
        </authorList>
    </citation>
    <scope>NUCLEOTIDE SEQUENCE [LARGE SCALE GENOMIC DNA]</scope>
    <source>
        <strain>ATCC 35897 / DSM 20650 / CCUG 15529 / CIP 8149 / NCTC 11857 / SLCC 5334 / V8</strain>
    </source>
</reference>
<evidence type="ECO:0000255" key="1">
    <source>
        <dbReference type="HAMAP-Rule" id="MF_00220"/>
    </source>
</evidence>
<feature type="chain" id="PRO_1000024093" description="Dihydroorotase">
    <location>
        <begin position="1"/>
        <end position="426"/>
    </location>
</feature>
<feature type="active site" evidence="1">
    <location>
        <position position="303"/>
    </location>
</feature>
<feature type="binding site" evidence="1">
    <location>
        <position position="58"/>
    </location>
    <ligand>
        <name>Zn(2+)</name>
        <dbReference type="ChEBI" id="CHEBI:29105"/>
        <label>1</label>
    </ligand>
</feature>
<feature type="binding site" evidence="1">
    <location>
        <begin position="60"/>
        <end position="62"/>
    </location>
    <ligand>
        <name>substrate</name>
    </ligand>
</feature>
<feature type="binding site" evidence="1">
    <location>
        <position position="60"/>
    </location>
    <ligand>
        <name>Zn(2+)</name>
        <dbReference type="ChEBI" id="CHEBI:29105"/>
        <label>1</label>
    </ligand>
</feature>
<feature type="binding site" evidence="1">
    <location>
        <position position="92"/>
    </location>
    <ligand>
        <name>substrate</name>
    </ligand>
</feature>
<feature type="binding site" evidence="1">
    <location>
        <position position="150"/>
    </location>
    <ligand>
        <name>Zn(2+)</name>
        <dbReference type="ChEBI" id="CHEBI:29105"/>
        <label>1</label>
    </ligand>
</feature>
<feature type="binding site" evidence="1">
    <location>
        <position position="150"/>
    </location>
    <ligand>
        <name>Zn(2+)</name>
        <dbReference type="ChEBI" id="CHEBI:29105"/>
        <label>2</label>
    </ligand>
</feature>
<feature type="binding site" evidence="1">
    <location>
        <position position="177"/>
    </location>
    <ligand>
        <name>Zn(2+)</name>
        <dbReference type="ChEBI" id="CHEBI:29105"/>
        <label>2</label>
    </ligand>
</feature>
<feature type="binding site" evidence="1">
    <location>
        <position position="230"/>
    </location>
    <ligand>
        <name>Zn(2+)</name>
        <dbReference type="ChEBI" id="CHEBI:29105"/>
        <label>2</label>
    </ligand>
</feature>
<feature type="binding site" evidence="1">
    <location>
        <position position="276"/>
    </location>
    <ligand>
        <name>substrate</name>
    </ligand>
</feature>
<feature type="binding site" evidence="1">
    <location>
        <position position="303"/>
    </location>
    <ligand>
        <name>Zn(2+)</name>
        <dbReference type="ChEBI" id="CHEBI:29105"/>
        <label>1</label>
    </ligand>
</feature>
<feature type="binding site" evidence="1">
    <location>
        <position position="307"/>
    </location>
    <ligand>
        <name>substrate</name>
    </ligand>
</feature>
<feature type="binding site" evidence="1">
    <location>
        <begin position="321"/>
        <end position="322"/>
    </location>
    <ligand>
        <name>substrate</name>
    </ligand>
</feature>
<name>PYRC_LISW6</name>
<proteinExistence type="inferred from homology"/>
<gene>
    <name evidence="1" type="primary">pyrC</name>
    <name type="ordered locus">lwe1856</name>
</gene>
<dbReference type="EC" id="3.5.2.3" evidence="1"/>
<dbReference type="EMBL" id="AM263198">
    <property type="protein sequence ID" value="CAK21274.1"/>
    <property type="molecule type" value="Genomic_DNA"/>
</dbReference>
<dbReference type="RefSeq" id="WP_011702626.1">
    <property type="nucleotide sequence ID" value="NC_008555.1"/>
</dbReference>
<dbReference type="SMR" id="A0AJU2"/>
<dbReference type="STRING" id="386043.lwe1856"/>
<dbReference type="GeneID" id="61189757"/>
<dbReference type="KEGG" id="lwe:lwe1856"/>
<dbReference type="eggNOG" id="COG0044">
    <property type="taxonomic scope" value="Bacteria"/>
</dbReference>
<dbReference type="HOGENOM" id="CLU_015572_1_0_9"/>
<dbReference type="OrthoDB" id="9765462at2"/>
<dbReference type="UniPathway" id="UPA00070">
    <property type="reaction ID" value="UER00117"/>
</dbReference>
<dbReference type="Proteomes" id="UP000000779">
    <property type="component" value="Chromosome"/>
</dbReference>
<dbReference type="GO" id="GO:0005737">
    <property type="term" value="C:cytoplasm"/>
    <property type="evidence" value="ECO:0007669"/>
    <property type="project" value="TreeGrafter"/>
</dbReference>
<dbReference type="GO" id="GO:0004038">
    <property type="term" value="F:allantoinase activity"/>
    <property type="evidence" value="ECO:0007669"/>
    <property type="project" value="TreeGrafter"/>
</dbReference>
<dbReference type="GO" id="GO:0004151">
    <property type="term" value="F:dihydroorotase activity"/>
    <property type="evidence" value="ECO:0007669"/>
    <property type="project" value="UniProtKB-UniRule"/>
</dbReference>
<dbReference type="GO" id="GO:0008270">
    <property type="term" value="F:zinc ion binding"/>
    <property type="evidence" value="ECO:0007669"/>
    <property type="project" value="UniProtKB-UniRule"/>
</dbReference>
<dbReference type="GO" id="GO:0044205">
    <property type="term" value="P:'de novo' UMP biosynthetic process"/>
    <property type="evidence" value="ECO:0007669"/>
    <property type="project" value="UniProtKB-UniRule"/>
</dbReference>
<dbReference type="GO" id="GO:0006145">
    <property type="term" value="P:purine nucleobase catabolic process"/>
    <property type="evidence" value="ECO:0007669"/>
    <property type="project" value="TreeGrafter"/>
</dbReference>
<dbReference type="CDD" id="cd01317">
    <property type="entry name" value="DHOase_IIa"/>
    <property type="match status" value="1"/>
</dbReference>
<dbReference type="Gene3D" id="3.20.20.140">
    <property type="entry name" value="Metal-dependent hydrolases"/>
    <property type="match status" value="1"/>
</dbReference>
<dbReference type="Gene3D" id="2.30.40.10">
    <property type="entry name" value="Urease, subunit C, domain 1"/>
    <property type="match status" value="1"/>
</dbReference>
<dbReference type="HAMAP" id="MF_00220_B">
    <property type="entry name" value="PyrC_classI_B"/>
    <property type="match status" value="1"/>
</dbReference>
<dbReference type="InterPro" id="IPR006680">
    <property type="entry name" value="Amidohydro-rel"/>
</dbReference>
<dbReference type="InterPro" id="IPR004722">
    <property type="entry name" value="DHOase"/>
</dbReference>
<dbReference type="InterPro" id="IPR050138">
    <property type="entry name" value="DHOase/Allantoinase_Hydrolase"/>
</dbReference>
<dbReference type="InterPro" id="IPR002195">
    <property type="entry name" value="Dihydroorotase_CS"/>
</dbReference>
<dbReference type="InterPro" id="IPR011059">
    <property type="entry name" value="Metal-dep_hydrolase_composite"/>
</dbReference>
<dbReference type="InterPro" id="IPR032466">
    <property type="entry name" value="Metal_Hydrolase"/>
</dbReference>
<dbReference type="NCBIfam" id="NF006837">
    <property type="entry name" value="PRK09357.1-2"/>
    <property type="match status" value="1"/>
</dbReference>
<dbReference type="NCBIfam" id="TIGR00857">
    <property type="entry name" value="pyrC_multi"/>
    <property type="match status" value="1"/>
</dbReference>
<dbReference type="PANTHER" id="PTHR43668">
    <property type="entry name" value="ALLANTOINASE"/>
    <property type="match status" value="1"/>
</dbReference>
<dbReference type="PANTHER" id="PTHR43668:SF2">
    <property type="entry name" value="ALLANTOINASE"/>
    <property type="match status" value="1"/>
</dbReference>
<dbReference type="Pfam" id="PF01979">
    <property type="entry name" value="Amidohydro_1"/>
    <property type="match status" value="1"/>
</dbReference>
<dbReference type="SUPFAM" id="SSF51338">
    <property type="entry name" value="Composite domain of metallo-dependent hydrolases"/>
    <property type="match status" value="1"/>
</dbReference>
<dbReference type="SUPFAM" id="SSF51556">
    <property type="entry name" value="Metallo-dependent hydrolases"/>
    <property type="match status" value="1"/>
</dbReference>
<dbReference type="PROSITE" id="PS00482">
    <property type="entry name" value="DIHYDROOROTASE_1"/>
    <property type="match status" value="1"/>
</dbReference>
<dbReference type="PROSITE" id="PS00483">
    <property type="entry name" value="DIHYDROOROTASE_2"/>
    <property type="match status" value="1"/>
</dbReference>
<keyword id="KW-0378">Hydrolase</keyword>
<keyword id="KW-0479">Metal-binding</keyword>
<keyword id="KW-0665">Pyrimidine biosynthesis</keyword>
<keyword id="KW-0862">Zinc</keyword>
<organism>
    <name type="scientific">Listeria welshimeri serovar 6b (strain ATCC 35897 / DSM 20650 / CCUG 15529 / CIP 8149 / NCTC 11857 / SLCC 5334 / V8)</name>
    <dbReference type="NCBI Taxonomy" id="386043"/>
    <lineage>
        <taxon>Bacteria</taxon>
        <taxon>Bacillati</taxon>
        <taxon>Bacillota</taxon>
        <taxon>Bacilli</taxon>
        <taxon>Bacillales</taxon>
        <taxon>Listeriaceae</taxon>
        <taxon>Listeria</taxon>
    </lineage>
</organism>